<keyword id="KW-0325">Glycoprotein</keyword>
<keyword id="KW-1185">Reference proteome</keyword>
<keyword id="KW-0964">Secreted</keyword>
<keyword id="KW-0732">Signal</keyword>
<keyword id="KW-0749">Sporulation</keyword>
<dbReference type="EMBL" id="M19468">
    <property type="protein sequence ID" value="AAA02987.1"/>
    <property type="molecule type" value="Unassigned_DNA"/>
</dbReference>
<dbReference type="EMBL" id="AAFI02000104">
    <property type="protein sequence ID" value="EAL63490.1"/>
    <property type="molecule type" value="Genomic_DNA"/>
</dbReference>
<dbReference type="PIR" id="S02162">
    <property type="entry name" value="S02162"/>
</dbReference>
<dbReference type="RefSeq" id="XP_637057.1">
    <property type="nucleotide sequence ID" value="XM_631965.1"/>
</dbReference>
<dbReference type="SMR" id="P15520"/>
<dbReference type="FunCoup" id="P15520">
    <property type="interactions" value="640"/>
</dbReference>
<dbReference type="STRING" id="44689.P15520"/>
<dbReference type="GlyCosmos" id="P15520">
    <property type="glycosylation" value="2 sites, No reported glycans"/>
</dbReference>
<dbReference type="GlyGen" id="P15520">
    <property type="glycosylation" value="2 sites"/>
</dbReference>
<dbReference type="PaxDb" id="44689-DDB0191381"/>
<dbReference type="EnsemblProtists" id="EAL63490">
    <property type="protein sequence ID" value="EAL63490"/>
    <property type="gene ID" value="DDB_G0287687"/>
</dbReference>
<dbReference type="GeneID" id="8626311"/>
<dbReference type="KEGG" id="ddi:DDB_G0287687"/>
<dbReference type="dictyBase" id="DDB_G0287687">
    <property type="gene designation" value="gerB"/>
</dbReference>
<dbReference type="VEuPathDB" id="AmoebaDB:DDB_G0287293"/>
<dbReference type="eggNOG" id="ENOG502RI0A">
    <property type="taxonomic scope" value="Eukaryota"/>
</dbReference>
<dbReference type="HOGENOM" id="CLU_1974670_0_0_1"/>
<dbReference type="InParanoid" id="P15520"/>
<dbReference type="OMA" id="TCSDTIC"/>
<dbReference type="PhylomeDB" id="P15520"/>
<dbReference type="PRO" id="PR:P15520"/>
<dbReference type="Proteomes" id="UP000002195">
    <property type="component" value="Chromosome 5"/>
</dbReference>
<dbReference type="GO" id="GO:0005576">
    <property type="term" value="C:extracellular region"/>
    <property type="evidence" value="ECO:0007669"/>
    <property type="project" value="UniProtKB-SubCell"/>
</dbReference>
<dbReference type="GO" id="GO:0009847">
    <property type="term" value="P:spore germination"/>
    <property type="evidence" value="ECO:0000270"/>
    <property type="project" value="dictyBase"/>
</dbReference>
<dbReference type="GO" id="GO:0030435">
    <property type="term" value="P:sporulation resulting in formation of a cellular spore"/>
    <property type="evidence" value="ECO:0007669"/>
    <property type="project" value="UniProtKB-KW"/>
</dbReference>
<organism>
    <name type="scientific">Dictyostelium discoideum</name>
    <name type="common">Social amoeba</name>
    <dbReference type="NCBI Taxonomy" id="44689"/>
    <lineage>
        <taxon>Eukaryota</taxon>
        <taxon>Amoebozoa</taxon>
        <taxon>Evosea</taxon>
        <taxon>Eumycetozoa</taxon>
        <taxon>Dictyostelia</taxon>
        <taxon>Dictyosteliales</taxon>
        <taxon>Dictyosteliaceae</taxon>
        <taxon>Dictyostelium</taxon>
    </lineage>
</organism>
<evidence type="ECO:0000255" key="1"/>
<evidence type="ECO:0000305" key="2"/>
<comment type="subcellular location">
    <subcellularLocation>
        <location evidence="2">Secreted</location>
    </subcellularLocation>
</comment>
<comment type="similarity">
    <text evidence="2">Belongs to the Dictyostelium gerABC family.</text>
</comment>
<feature type="signal peptide" evidence="1">
    <location>
        <begin position="1"/>
        <end position="25"/>
    </location>
</feature>
<feature type="chain" id="PRO_0000022393" description="Spore germination protein 2">
    <location>
        <begin position="26"/>
        <end position="127"/>
    </location>
</feature>
<feature type="glycosylation site" description="N-linked (GlcNAc...) asparagine" evidence="1">
    <location>
        <position position="54"/>
    </location>
</feature>
<feature type="glycosylation site" description="N-linked (GlcNAc...) asparagine" evidence="1">
    <location>
        <position position="118"/>
    </location>
</feature>
<sequence length="127" mass="14080">MNIRNSLILIISTILFFSIINGSLSLDPTCVGAPDGQVYLFSSWDFKGDRYVYNVSQGYLSLSDGFRGNVQSFISGADVCFVKWYPIEQYQITAGESHRNYAALTNFGQRMDAIIPGNCSNIVCSPK</sequence>
<reference key="1">
    <citation type="journal article" date="1989" name="J. Mol. Biol.">
        <title>Organization of a gene family developmentally regulated during Dictyostelium discoideum spore germination.</title>
        <authorList>
            <person name="Giorda R."/>
            <person name="Ohmachi T."/>
            <person name="Ennis H.L."/>
        </authorList>
    </citation>
    <scope>NUCLEOTIDE SEQUENCE</scope>
</reference>
<reference key="2">
    <citation type="journal article" date="2005" name="Nature">
        <title>The genome of the social amoeba Dictyostelium discoideum.</title>
        <authorList>
            <person name="Eichinger L."/>
            <person name="Pachebat J.A."/>
            <person name="Gloeckner G."/>
            <person name="Rajandream M.A."/>
            <person name="Sucgang R."/>
            <person name="Berriman M."/>
            <person name="Song J."/>
            <person name="Olsen R."/>
            <person name="Szafranski K."/>
            <person name="Xu Q."/>
            <person name="Tunggal B."/>
            <person name="Kummerfeld S."/>
            <person name="Madera M."/>
            <person name="Konfortov B.A."/>
            <person name="Rivero F."/>
            <person name="Bankier A.T."/>
            <person name="Lehmann R."/>
            <person name="Hamlin N."/>
            <person name="Davies R."/>
            <person name="Gaudet P."/>
            <person name="Fey P."/>
            <person name="Pilcher K."/>
            <person name="Chen G."/>
            <person name="Saunders D."/>
            <person name="Sodergren E.J."/>
            <person name="Davis P."/>
            <person name="Kerhornou A."/>
            <person name="Nie X."/>
            <person name="Hall N."/>
            <person name="Anjard C."/>
            <person name="Hemphill L."/>
            <person name="Bason N."/>
            <person name="Farbrother P."/>
            <person name="Desany B."/>
            <person name="Just E."/>
            <person name="Morio T."/>
            <person name="Rost R."/>
            <person name="Churcher C.M."/>
            <person name="Cooper J."/>
            <person name="Haydock S."/>
            <person name="van Driessche N."/>
            <person name="Cronin A."/>
            <person name="Goodhead I."/>
            <person name="Muzny D.M."/>
            <person name="Mourier T."/>
            <person name="Pain A."/>
            <person name="Lu M."/>
            <person name="Harper D."/>
            <person name="Lindsay R."/>
            <person name="Hauser H."/>
            <person name="James K.D."/>
            <person name="Quiles M."/>
            <person name="Madan Babu M."/>
            <person name="Saito T."/>
            <person name="Buchrieser C."/>
            <person name="Wardroper A."/>
            <person name="Felder M."/>
            <person name="Thangavelu M."/>
            <person name="Johnson D."/>
            <person name="Knights A."/>
            <person name="Loulseged H."/>
            <person name="Mungall K.L."/>
            <person name="Oliver K."/>
            <person name="Price C."/>
            <person name="Quail M.A."/>
            <person name="Urushihara H."/>
            <person name="Hernandez J."/>
            <person name="Rabbinowitsch E."/>
            <person name="Steffen D."/>
            <person name="Sanders M."/>
            <person name="Ma J."/>
            <person name="Kohara Y."/>
            <person name="Sharp S."/>
            <person name="Simmonds M.N."/>
            <person name="Spiegler S."/>
            <person name="Tivey A."/>
            <person name="Sugano S."/>
            <person name="White B."/>
            <person name="Walker D."/>
            <person name="Woodward J.R."/>
            <person name="Winckler T."/>
            <person name="Tanaka Y."/>
            <person name="Shaulsky G."/>
            <person name="Schleicher M."/>
            <person name="Weinstock G.M."/>
            <person name="Rosenthal A."/>
            <person name="Cox E.C."/>
            <person name="Chisholm R.L."/>
            <person name="Gibbs R.A."/>
            <person name="Loomis W.F."/>
            <person name="Platzer M."/>
            <person name="Kay R.R."/>
            <person name="Williams J.G."/>
            <person name="Dear P.H."/>
            <person name="Noegel A.A."/>
            <person name="Barrell B.G."/>
            <person name="Kuspa A."/>
        </authorList>
    </citation>
    <scope>NUCLEOTIDE SEQUENCE [LARGE SCALE GENOMIC DNA]</scope>
    <source>
        <strain>AX4</strain>
    </source>
</reference>
<protein>
    <recommendedName>
        <fullName>Spore germination protein 2</fullName>
        <shortName>SPG2</shortName>
    </recommendedName>
</protein>
<gene>
    <name type="primary">gerB</name>
    <name type="ORF">DDB_G0287687</name>
</gene>
<name>SPG2_DICDI</name>
<proteinExistence type="inferred from homology"/>
<accession>P15520</accession>
<accession>Q54JU5</accession>